<organism>
    <name type="scientific">Microcystis aeruginosa (strain NIES-843 / IAM M-2473)</name>
    <dbReference type="NCBI Taxonomy" id="449447"/>
    <lineage>
        <taxon>Bacteria</taxon>
        <taxon>Bacillati</taxon>
        <taxon>Cyanobacteriota</taxon>
        <taxon>Cyanophyceae</taxon>
        <taxon>Oscillatoriophycideae</taxon>
        <taxon>Chroococcales</taxon>
        <taxon>Microcystaceae</taxon>
        <taxon>Microcystis</taxon>
    </lineage>
</organism>
<protein>
    <recommendedName>
        <fullName evidence="1">ATP synthase subunit delta</fullName>
    </recommendedName>
    <alternativeName>
        <fullName evidence="1">ATP synthase F(1) sector subunit delta</fullName>
    </alternativeName>
    <alternativeName>
        <fullName evidence="1">F-type ATPase subunit delta</fullName>
        <shortName evidence="1">F-ATPase subunit delta</shortName>
    </alternativeName>
</protein>
<feature type="chain" id="PRO_0000371027" description="ATP synthase subunit delta">
    <location>
        <begin position="1"/>
        <end position="182"/>
    </location>
</feature>
<reference key="1">
    <citation type="journal article" date="2007" name="DNA Res.">
        <title>Complete genomic structure of the bloom-forming toxic cyanobacterium Microcystis aeruginosa NIES-843.</title>
        <authorList>
            <person name="Kaneko T."/>
            <person name="Nakajima N."/>
            <person name="Okamoto S."/>
            <person name="Suzuki I."/>
            <person name="Tanabe Y."/>
            <person name="Tamaoki M."/>
            <person name="Nakamura Y."/>
            <person name="Kasai F."/>
            <person name="Watanabe A."/>
            <person name="Kawashima K."/>
            <person name="Kishida Y."/>
            <person name="Ono A."/>
            <person name="Shimizu Y."/>
            <person name="Takahashi C."/>
            <person name="Minami C."/>
            <person name="Fujishiro T."/>
            <person name="Kohara M."/>
            <person name="Katoh M."/>
            <person name="Nakazaki N."/>
            <person name="Nakayama S."/>
            <person name="Yamada M."/>
            <person name="Tabata S."/>
            <person name="Watanabe M.M."/>
        </authorList>
    </citation>
    <scope>NUCLEOTIDE SEQUENCE [LARGE SCALE GENOMIC DNA]</scope>
    <source>
        <strain>NIES-843 / IAM M-247</strain>
    </source>
</reference>
<evidence type="ECO:0000255" key="1">
    <source>
        <dbReference type="HAMAP-Rule" id="MF_01416"/>
    </source>
</evidence>
<gene>
    <name evidence="1" type="primary">atpH</name>
    <name evidence="1" type="synonym">atpD</name>
    <name type="ordered locus">MAE_50150</name>
</gene>
<comment type="function">
    <text evidence="1">F(1)F(0) ATP synthase produces ATP from ADP in the presence of a proton or sodium gradient. F-type ATPases consist of two structural domains, F(1) containing the extramembraneous catalytic core and F(0) containing the membrane proton channel, linked together by a central stalk and a peripheral stalk. During catalysis, ATP synthesis in the catalytic domain of F(1) is coupled via a rotary mechanism of the central stalk subunits to proton translocation.</text>
</comment>
<comment type="function">
    <text evidence="1">This protein is part of the stalk that links CF(0) to CF(1). It either transmits conformational changes from CF(0) to CF(1) or is implicated in proton conduction.</text>
</comment>
<comment type="subunit">
    <text evidence="1">F-type ATPases have 2 components, F(1) - the catalytic core - and F(0) - the membrane proton channel. F(1) has five subunits: alpha(3), beta(3), gamma(1), delta(1), epsilon(1). CF(0) has four main subunits: a(1), b(1), b'(1) and c(10-14). The alpha and beta chains form an alternating ring which encloses part of the gamma chain. F(1) is attached to F(0) by a central stalk formed by the gamma and epsilon chains, while a peripheral stalk is formed by the delta, b and b' chains.</text>
</comment>
<comment type="subcellular location">
    <subcellularLocation>
        <location evidence="1">Cellular thylakoid membrane</location>
        <topology evidence="1">Peripheral membrane protein</topology>
    </subcellularLocation>
</comment>
<comment type="similarity">
    <text evidence="1">Belongs to the ATPase delta chain family.</text>
</comment>
<dbReference type="EMBL" id="AP009552">
    <property type="protein sequence ID" value="BAG04837.1"/>
    <property type="molecule type" value="Genomic_DNA"/>
</dbReference>
<dbReference type="RefSeq" id="WP_002763366.1">
    <property type="nucleotide sequence ID" value="NC_010296.1"/>
</dbReference>
<dbReference type="SMR" id="B0JWV0"/>
<dbReference type="STRING" id="449447.MAE_50150"/>
<dbReference type="PaxDb" id="449447-MAE_50150"/>
<dbReference type="EnsemblBacteria" id="BAG04837">
    <property type="protein sequence ID" value="BAG04837"/>
    <property type="gene ID" value="MAE_50150"/>
</dbReference>
<dbReference type="KEGG" id="mar:MAE_50150"/>
<dbReference type="eggNOG" id="COG0712">
    <property type="taxonomic scope" value="Bacteria"/>
</dbReference>
<dbReference type="HOGENOM" id="CLU_085114_4_0_3"/>
<dbReference type="BioCyc" id="MAER449447:MAE_RS21765-MONOMER"/>
<dbReference type="Proteomes" id="UP000001510">
    <property type="component" value="Chromosome"/>
</dbReference>
<dbReference type="GO" id="GO:0031676">
    <property type="term" value="C:plasma membrane-derived thylakoid membrane"/>
    <property type="evidence" value="ECO:0007669"/>
    <property type="project" value="UniProtKB-SubCell"/>
</dbReference>
<dbReference type="GO" id="GO:0045259">
    <property type="term" value="C:proton-transporting ATP synthase complex"/>
    <property type="evidence" value="ECO:0007669"/>
    <property type="project" value="UniProtKB-KW"/>
</dbReference>
<dbReference type="GO" id="GO:0046933">
    <property type="term" value="F:proton-transporting ATP synthase activity, rotational mechanism"/>
    <property type="evidence" value="ECO:0007669"/>
    <property type="project" value="UniProtKB-UniRule"/>
</dbReference>
<dbReference type="Gene3D" id="1.10.520.20">
    <property type="entry name" value="N-terminal domain of the delta subunit of the F1F0-ATP synthase"/>
    <property type="match status" value="1"/>
</dbReference>
<dbReference type="HAMAP" id="MF_01416">
    <property type="entry name" value="ATP_synth_delta_bact"/>
    <property type="match status" value="1"/>
</dbReference>
<dbReference type="InterPro" id="IPR026015">
    <property type="entry name" value="ATP_synth_OSCP/delta_N_sf"/>
</dbReference>
<dbReference type="InterPro" id="IPR020781">
    <property type="entry name" value="ATPase_OSCP/d_CS"/>
</dbReference>
<dbReference type="InterPro" id="IPR000711">
    <property type="entry name" value="ATPase_OSCP/dsu"/>
</dbReference>
<dbReference type="NCBIfam" id="TIGR01145">
    <property type="entry name" value="ATP_synt_delta"/>
    <property type="match status" value="1"/>
</dbReference>
<dbReference type="PANTHER" id="PTHR11910">
    <property type="entry name" value="ATP SYNTHASE DELTA CHAIN"/>
    <property type="match status" value="1"/>
</dbReference>
<dbReference type="Pfam" id="PF00213">
    <property type="entry name" value="OSCP"/>
    <property type="match status" value="1"/>
</dbReference>
<dbReference type="PRINTS" id="PR00125">
    <property type="entry name" value="ATPASEDELTA"/>
</dbReference>
<dbReference type="SUPFAM" id="SSF47928">
    <property type="entry name" value="N-terminal domain of the delta subunit of the F1F0-ATP synthase"/>
    <property type="match status" value="1"/>
</dbReference>
<dbReference type="PROSITE" id="PS00389">
    <property type="entry name" value="ATPASE_DELTA"/>
    <property type="match status" value="1"/>
</dbReference>
<keyword id="KW-0066">ATP synthesis</keyword>
<keyword id="KW-0139">CF(1)</keyword>
<keyword id="KW-0375">Hydrogen ion transport</keyword>
<keyword id="KW-0406">Ion transport</keyword>
<keyword id="KW-0472">Membrane</keyword>
<keyword id="KW-0793">Thylakoid</keyword>
<keyword id="KW-0813">Transport</keyword>
<accession>B0JWV0</accession>
<name>ATPD_MICAN</name>
<proteinExistence type="inferred from homology"/>
<sequence>MQGSLISSEIAEPYAQALLSVAQSSGQLEAIGGEIKSLLELLENAPDLRAFIGNPVIKEEAKKAVLSQVMGSSANPYLTNFMMLLVDKRRIQFLEPVCQQYLTLARVLTNTVLAEVSSATELNDSQKQIVIDKVKTLTGANVVELKTKVDGSLIGGVVIKVGSQVFDASIRGQLQRLSLSLR</sequence>